<feature type="signal peptide" evidence="3">
    <location>
        <begin position="1"/>
        <end position="28"/>
    </location>
</feature>
<feature type="propeptide" id="PRO_0000017473" evidence="3">
    <location>
        <begin position="29"/>
        <end position="38"/>
    </location>
</feature>
<feature type="chain" id="PRO_0000017474" description="L-selectin">
    <location>
        <begin position="39"/>
        <end position="370"/>
    </location>
</feature>
<feature type="topological domain" description="Extracellular" evidence="3">
    <location>
        <begin position="39"/>
        <end position="333"/>
    </location>
</feature>
<feature type="transmembrane region" description="Helical" evidence="3">
    <location>
        <begin position="334"/>
        <end position="354"/>
    </location>
</feature>
<feature type="topological domain" description="Cytoplasmic" evidence="3">
    <location>
        <begin position="355"/>
        <end position="370"/>
    </location>
</feature>
<feature type="domain" description="C-type lectin" evidence="4">
    <location>
        <begin position="55"/>
        <end position="155"/>
    </location>
</feature>
<feature type="domain" description="EGF-like" evidence="5">
    <location>
        <begin position="156"/>
        <end position="192"/>
    </location>
</feature>
<feature type="domain" description="Sushi 1" evidence="6">
    <location>
        <begin position="195"/>
        <end position="256"/>
    </location>
</feature>
<feature type="domain" description="Sushi 2" evidence="6">
    <location>
        <begin position="257"/>
        <end position="318"/>
    </location>
</feature>
<feature type="binding site" evidence="2">
    <location>
        <position position="118"/>
    </location>
    <ligand>
        <name>Ca(2+)</name>
        <dbReference type="ChEBI" id="CHEBI:29108"/>
    </ligand>
</feature>
<feature type="binding site" evidence="2">
    <location>
        <position position="120"/>
    </location>
    <ligand>
        <name>Ca(2+)</name>
        <dbReference type="ChEBI" id="CHEBI:29108"/>
    </ligand>
</feature>
<feature type="binding site" evidence="2">
    <location>
        <position position="126"/>
    </location>
    <ligand>
        <name>Ca(2+)</name>
        <dbReference type="ChEBI" id="CHEBI:29108"/>
    </ligand>
</feature>
<feature type="binding site" evidence="2">
    <location>
        <position position="143"/>
    </location>
    <ligand>
        <name>Ca(2+)</name>
        <dbReference type="ChEBI" id="CHEBI:29108"/>
    </ligand>
</feature>
<feature type="binding site" evidence="2">
    <location>
        <position position="144"/>
    </location>
    <ligand>
        <name>Ca(2+)</name>
        <dbReference type="ChEBI" id="CHEBI:29108"/>
    </ligand>
</feature>
<feature type="glycosylation site" description="N-linked (GlcNAc...) asparagine" evidence="3">
    <location>
        <position position="60"/>
    </location>
</feature>
<feature type="glycosylation site" description="N-linked (GlcNAc...) asparagine" evidence="3">
    <location>
        <position position="77"/>
    </location>
</feature>
<feature type="glycosylation site" description="N-linked (GlcNAc...) asparagine" evidence="3">
    <location>
        <position position="104"/>
    </location>
</feature>
<feature type="glycosylation site" description="N-linked (GlcNAc...) asparagine" evidence="3">
    <location>
        <position position="177"/>
    </location>
</feature>
<feature type="glycosylation site" description="N-linked (GlcNAc...) asparagine" evidence="3">
    <location>
        <position position="216"/>
    </location>
</feature>
<feature type="glycosylation site" description="N-linked (GlcNAc...) asparagine" evidence="3">
    <location>
        <position position="226"/>
    </location>
</feature>
<feature type="glycosylation site" description="N-linked (GlcNAc...) asparagine" evidence="3">
    <location>
        <position position="246"/>
    </location>
</feature>
<feature type="glycosylation site" description="N-linked (GlcNAc...) asparagine" evidence="3">
    <location>
        <position position="308"/>
    </location>
</feature>
<feature type="glycosylation site" description="N-linked (GlcNAc...) asparagine" evidence="3">
    <location>
        <position position="320"/>
    </location>
</feature>
<feature type="disulfide bond" evidence="2">
    <location>
        <begin position="57"/>
        <end position="155"/>
    </location>
</feature>
<feature type="disulfide bond" evidence="2">
    <location>
        <begin position="128"/>
        <end position="160"/>
    </location>
</feature>
<feature type="disulfide bond" evidence="2">
    <location>
        <begin position="128"/>
        <end position="147"/>
    </location>
</feature>
<feature type="disulfide bond" evidence="2">
    <location>
        <begin position="160"/>
        <end position="171"/>
    </location>
</feature>
<feature type="disulfide bond" evidence="1">
    <location>
        <begin position="165"/>
        <end position="180"/>
    </location>
</feature>
<feature type="disulfide bond" evidence="2">
    <location>
        <begin position="182"/>
        <end position="191"/>
    </location>
</feature>
<feature type="disulfide bond" evidence="1">
    <location>
        <begin position="197"/>
        <end position="241"/>
    </location>
</feature>
<feature type="disulfide bond" evidence="1">
    <location>
        <begin position="227"/>
        <end position="254"/>
    </location>
</feature>
<feature type="disulfide bond" evidence="1">
    <location>
        <begin position="259"/>
        <end position="303"/>
    </location>
</feature>
<feature type="disulfide bond" evidence="1">
    <location>
        <begin position="289"/>
        <end position="316"/>
    </location>
</feature>
<gene>
    <name type="primary">SELL</name>
</gene>
<proteinExistence type="evidence at transcript level"/>
<reference key="1">
    <citation type="journal article" date="1992" name="Eur. J. Immunol.">
        <title>Characterization of the bovine peripheral lymph node homing receptor: a lectin cell adhesion molecule (LECAM).</title>
        <authorList>
            <person name="Walcheck B."/>
            <person name="White M."/>
            <person name="Kurk S."/>
            <person name="Kishimoto T.K."/>
            <person name="Jutila M.A."/>
        </authorList>
    </citation>
    <scope>NUCLEOTIDE SEQUENCE [MRNA]</scope>
    <scope>FUNCTION</scope>
    <scope>SUBCELLULAR LOCATION</scope>
    <scope>TISSUE SPECIFICITY</scope>
    <source>
        <tissue>Lymphocyte</tissue>
    </source>
</reference>
<reference key="2">
    <citation type="journal article" date="1993" name="Vet. Immunol. Immunopathol.">
        <title>Bovine L-selectin: a peripheral lymphocyte homing receptor.</title>
        <authorList>
            <person name="Bosworth B.T."/>
            <person name="Dowbenko D."/>
            <person name="Shuster D.E."/>
            <person name="Harp J.A."/>
        </authorList>
    </citation>
    <scope>NUCLEOTIDE SEQUENCE [MRNA]</scope>
    <scope>FUNCTION</scope>
    <scope>SUBCELLULAR LOCATION</scope>
    <scope>TISSUE SPECIFICITY</scope>
    <source>
        <tissue>Lymphocyte</tissue>
    </source>
</reference>
<accession>P98131</accession>
<protein>
    <recommendedName>
        <fullName>L-selectin</fullName>
    </recommendedName>
    <alternativeName>
        <fullName>CD62 antigen-like family member L</fullName>
    </alternativeName>
    <alternativeName>
        <fullName>Leukocyte adhesion molecule 1</fullName>
        <shortName>LAM-1</shortName>
    </alternativeName>
    <alternativeName>
        <fullName evidence="9">Leukocyte-endothelial cell adhesion molecule 1</fullName>
        <shortName evidence="9">LECAM1</shortName>
    </alternativeName>
    <alternativeName>
        <fullName evidence="9">Lymph node homing receptor</fullName>
    </alternativeName>
    <cdAntigenName>CD62L</cdAntigenName>
</protein>
<organism>
    <name type="scientific">Bos taurus</name>
    <name type="common">Bovine</name>
    <dbReference type="NCBI Taxonomy" id="9913"/>
    <lineage>
        <taxon>Eukaryota</taxon>
        <taxon>Metazoa</taxon>
        <taxon>Chordata</taxon>
        <taxon>Craniata</taxon>
        <taxon>Vertebrata</taxon>
        <taxon>Euteleostomi</taxon>
        <taxon>Mammalia</taxon>
        <taxon>Eutheria</taxon>
        <taxon>Laurasiatheria</taxon>
        <taxon>Artiodactyla</taxon>
        <taxon>Ruminantia</taxon>
        <taxon>Pecora</taxon>
        <taxon>Bovidae</taxon>
        <taxon>Bovinae</taxon>
        <taxon>Bos</taxon>
    </lineage>
</organism>
<name>LYAM1_BOVIN</name>
<comment type="function">
    <text evidence="7 8">Calcium-dependent lectin that mediates cell adhesion by binding to glycoproteins on neighboring cells. Mediates the adherence of lymphocytes to endothelial cells of high endothelial venules in peripheral lymph nodes. Promotes initial tethering and rolling of leukocytes in endothelia.</text>
</comment>
<comment type="subunit">
    <text evidence="2">Interaction with SELPLG/PSGL1 and PODXL2 is required for promoting recruitment and rolling of leukocytes. This interaction is dependent on the sialyl Lewis X glycan modification of SELPLG and PODXL2, and tyrosine sulfation modifications of SELPLG. Sulfation on 'Tyr-51' of SELPLG is important for L-selectin binding.</text>
</comment>
<comment type="subcellular location">
    <subcellularLocation>
        <location evidence="7 8">Cell membrane</location>
        <topology evidence="10">Single-pass type I membrane protein</topology>
    </subcellularLocation>
</comment>
<comment type="tissue specificity">
    <text evidence="7 8">Highly expressed in lymphocytes from peripheral lymph nodes. Low in lymphocytes isolated from Peyer patches.</text>
</comment>
<comment type="PTM">
    <text evidence="2">N-glycosylated.</text>
</comment>
<comment type="similarity">
    <text evidence="10">Belongs to the selectin/LECAM family.</text>
</comment>
<sequence length="370" mass="41971">MLCPWKCQNAQRGLWNVFKLWVWIMLCCDFFAHHGTDCWTYHYSKRPMPWEKARAFCRENYTDLVAIQNKGEIEYLNKTLPFSRTYYWIGIRKVEGVWTWVGTNKSLTEEAKNWGAGEPNNRKSKEDCVEIYIKRNKDSGKWNDDACHKAKTALCYTASCKPWSCSGHGQCVEVINNYTCNCDLGYYGPECQFVTQCVPLEAPKLGTMACTHPLGNFSFMSQCAFNCSKGTDMIGVEETTCAPFGNWSSPEPTCRVIQCEPLTEPDLGTMDCNHPLVDFGFSSTCTFSCSEEAELTGEKKTICGLSGNWSSPSPRCQKINRTISINEESDYNPLFIPVAVMVTAFSGLAFIIWLARRLKRKSKKVSEKHG</sequence>
<dbReference type="EMBL" id="X62882">
    <property type="protein sequence ID" value="CAA44676.1"/>
    <property type="molecule type" value="mRNA"/>
</dbReference>
<dbReference type="PIR" id="S22124">
    <property type="entry name" value="S22124"/>
</dbReference>
<dbReference type="RefSeq" id="NP_776607.1">
    <property type="nucleotide sequence ID" value="NM_174182.1"/>
</dbReference>
<dbReference type="SMR" id="P98131"/>
<dbReference type="FunCoup" id="P98131">
    <property type="interactions" value="203"/>
</dbReference>
<dbReference type="STRING" id="9913.ENSBTAP00000044113"/>
<dbReference type="GlyCosmos" id="P98131">
    <property type="glycosylation" value="9 sites, No reported glycans"/>
</dbReference>
<dbReference type="GlyGen" id="P98131">
    <property type="glycosylation" value="9 sites"/>
</dbReference>
<dbReference type="PaxDb" id="9913-ENSBTAP00000044113"/>
<dbReference type="GeneID" id="281485"/>
<dbReference type="KEGG" id="bta:281485"/>
<dbReference type="CTD" id="6402"/>
<dbReference type="eggNOG" id="KOG4297">
    <property type="taxonomic scope" value="Eukaryota"/>
</dbReference>
<dbReference type="InParanoid" id="P98131"/>
<dbReference type="OrthoDB" id="406096at2759"/>
<dbReference type="Proteomes" id="UP000009136">
    <property type="component" value="Unplaced"/>
</dbReference>
<dbReference type="GO" id="GO:0009897">
    <property type="term" value="C:external side of plasma membrane"/>
    <property type="evidence" value="ECO:0000318"/>
    <property type="project" value="GO_Central"/>
</dbReference>
<dbReference type="GO" id="GO:0005615">
    <property type="term" value="C:extracellular space"/>
    <property type="evidence" value="ECO:0000318"/>
    <property type="project" value="GO_Central"/>
</dbReference>
<dbReference type="GO" id="GO:0016020">
    <property type="term" value="C:membrane"/>
    <property type="evidence" value="ECO:0000304"/>
    <property type="project" value="AgBase"/>
</dbReference>
<dbReference type="GO" id="GO:0005886">
    <property type="term" value="C:plasma membrane"/>
    <property type="evidence" value="ECO:0000250"/>
    <property type="project" value="UniProtKB"/>
</dbReference>
<dbReference type="GO" id="GO:0005509">
    <property type="term" value="F:calcium ion binding"/>
    <property type="evidence" value="ECO:0000250"/>
    <property type="project" value="UniProtKB"/>
</dbReference>
<dbReference type="GO" id="GO:0070492">
    <property type="term" value="F:oligosaccharide binding"/>
    <property type="evidence" value="ECO:0000250"/>
    <property type="project" value="UniProtKB"/>
</dbReference>
<dbReference type="GO" id="GO:0033691">
    <property type="term" value="F:sialic acid binding"/>
    <property type="evidence" value="ECO:0000318"/>
    <property type="project" value="GO_Central"/>
</dbReference>
<dbReference type="GO" id="GO:0016339">
    <property type="term" value="P:calcium-dependent cell-cell adhesion via plasma membrane cell adhesion molecules"/>
    <property type="evidence" value="ECO:0000250"/>
    <property type="project" value="UniProtKB"/>
</dbReference>
<dbReference type="GO" id="GO:0007155">
    <property type="term" value="P:cell adhesion"/>
    <property type="evidence" value="ECO:0000303"/>
    <property type="project" value="AgBase"/>
</dbReference>
<dbReference type="GO" id="GO:0007157">
    <property type="term" value="P:heterophilic cell-cell adhesion via plasma membrane cell adhesion molecules"/>
    <property type="evidence" value="ECO:0000318"/>
    <property type="project" value="GO_Central"/>
</dbReference>
<dbReference type="GO" id="GO:0050901">
    <property type="term" value="P:leukocyte tethering or rolling"/>
    <property type="evidence" value="ECO:0000250"/>
    <property type="project" value="UniProtKB"/>
</dbReference>
<dbReference type="GO" id="GO:0034097">
    <property type="term" value="P:response to cytokine"/>
    <property type="evidence" value="ECO:0000318"/>
    <property type="project" value="GO_Central"/>
</dbReference>
<dbReference type="CDD" id="cd00033">
    <property type="entry name" value="CCP"/>
    <property type="match status" value="2"/>
</dbReference>
<dbReference type="CDD" id="cd00054">
    <property type="entry name" value="EGF_CA"/>
    <property type="match status" value="1"/>
</dbReference>
<dbReference type="FunFam" id="3.10.100.10:FF:000007">
    <property type="entry name" value="L-selectin"/>
    <property type="match status" value="1"/>
</dbReference>
<dbReference type="FunFam" id="2.10.25.10:FF:000176">
    <property type="entry name" value="Selectin P"/>
    <property type="match status" value="1"/>
</dbReference>
<dbReference type="FunFam" id="2.10.70.10:FF:000001">
    <property type="entry name" value="Selectin P"/>
    <property type="match status" value="2"/>
</dbReference>
<dbReference type="Gene3D" id="2.10.70.10">
    <property type="entry name" value="Complement Module, domain 1"/>
    <property type="match status" value="2"/>
</dbReference>
<dbReference type="Gene3D" id="2.10.25.10">
    <property type="entry name" value="Laminin"/>
    <property type="match status" value="1"/>
</dbReference>
<dbReference type="Gene3D" id="3.10.100.10">
    <property type="entry name" value="Mannose-Binding Protein A, subunit A"/>
    <property type="match status" value="1"/>
</dbReference>
<dbReference type="InterPro" id="IPR001304">
    <property type="entry name" value="C-type_lectin-like"/>
</dbReference>
<dbReference type="InterPro" id="IPR016186">
    <property type="entry name" value="C-type_lectin-like/link_sf"/>
</dbReference>
<dbReference type="InterPro" id="IPR018378">
    <property type="entry name" value="C-type_lectin_CS"/>
</dbReference>
<dbReference type="InterPro" id="IPR050350">
    <property type="entry name" value="Compl-Cell_Adhes-Reg"/>
</dbReference>
<dbReference type="InterPro" id="IPR016187">
    <property type="entry name" value="CTDL_fold"/>
</dbReference>
<dbReference type="InterPro" id="IPR000742">
    <property type="entry name" value="EGF-like_dom"/>
</dbReference>
<dbReference type="InterPro" id="IPR016348">
    <property type="entry name" value="L-selectin"/>
</dbReference>
<dbReference type="InterPro" id="IPR002396">
    <property type="entry name" value="Selectin_superfamily"/>
</dbReference>
<dbReference type="InterPro" id="IPR035976">
    <property type="entry name" value="Sushi/SCR/CCP_sf"/>
</dbReference>
<dbReference type="InterPro" id="IPR000436">
    <property type="entry name" value="Sushi_SCR_CCP_dom"/>
</dbReference>
<dbReference type="PANTHER" id="PTHR19325">
    <property type="entry name" value="COMPLEMENT COMPONENT-RELATED SUSHI DOMAIN-CONTAINING"/>
    <property type="match status" value="1"/>
</dbReference>
<dbReference type="PANTHER" id="PTHR19325:SF543">
    <property type="entry name" value="L-SELECTIN"/>
    <property type="match status" value="1"/>
</dbReference>
<dbReference type="Pfam" id="PF00008">
    <property type="entry name" value="EGF"/>
    <property type="match status" value="1"/>
</dbReference>
<dbReference type="Pfam" id="PF00059">
    <property type="entry name" value="Lectin_C"/>
    <property type="match status" value="1"/>
</dbReference>
<dbReference type="Pfam" id="PF00084">
    <property type="entry name" value="Sushi"/>
    <property type="match status" value="2"/>
</dbReference>
<dbReference type="PIRSF" id="PIRSF002421">
    <property type="entry name" value="L-selectin"/>
    <property type="match status" value="1"/>
</dbReference>
<dbReference type="PRINTS" id="PR00343">
    <property type="entry name" value="SELECTIN"/>
</dbReference>
<dbReference type="SMART" id="SM00032">
    <property type="entry name" value="CCP"/>
    <property type="match status" value="2"/>
</dbReference>
<dbReference type="SMART" id="SM00034">
    <property type="entry name" value="CLECT"/>
    <property type="match status" value="1"/>
</dbReference>
<dbReference type="SMART" id="SM00181">
    <property type="entry name" value="EGF"/>
    <property type="match status" value="1"/>
</dbReference>
<dbReference type="SUPFAM" id="SSF56436">
    <property type="entry name" value="C-type lectin-like"/>
    <property type="match status" value="1"/>
</dbReference>
<dbReference type="SUPFAM" id="SSF57535">
    <property type="entry name" value="Complement control module/SCR domain"/>
    <property type="match status" value="2"/>
</dbReference>
<dbReference type="SUPFAM" id="SSF57196">
    <property type="entry name" value="EGF/Laminin"/>
    <property type="match status" value="1"/>
</dbReference>
<dbReference type="PROSITE" id="PS00615">
    <property type="entry name" value="C_TYPE_LECTIN_1"/>
    <property type="match status" value="1"/>
</dbReference>
<dbReference type="PROSITE" id="PS50041">
    <property type="entry name" value="C_TYPE_LECTIN_2"/>
    <property type="match status" value="1"/>
</dbReference>
<dbReference type="PROSITE" id="PS00022">
    <property type="entry name" value="EGF_1"/>
    <property type="match status" value="1"/>
</dbReference>
<dbReference type="PROSITE" id="PS01186">
    <property type="entry name" value="EGF_2"/>
    <property type="match status" value="1"/>
</dbReference>
<dbReference type="PROSITE" id="PS50026">
    <property type="entry name" value="EGF_3"/>
    <property type="match status" value="1"/>
</dbReference>
<dbReference type="PROSITE" id="PS50923">
    <property type="entry name" value="SUSHI"/>
    <property type="match status" value="2"/>
</dbReference>
<evidence type="ECO:0000250" key="1"/>
<evidence type="ECO:0000250" key="2">
    <source>
        <dbReference type="UniProtKB" id="P14151"/>
    </source>
</evidence>
<evidence type="ECO:0000255" key="3"/>
<evidence type="ECO:0000255" key="4">
    <source>
        <dbReference type="PROSITE-ProRule" id="PRU00040"/>
    </source>
</evidence>
<evidence type="ECO:0000255" key="5">
    <source>
        <dbReference type="PROSITE-ProRule" id="PRU00076"/>
    </source>
</evidence>
<evidence type="ECO:0000255" key="6">
    <source>
        <dbReference type="PROSITE-ProRule" id="PRU00302"/>
    </source>
</evidence>
<evidence type="ECO:0000269" key="7">
    <source>
    </source>
</evidence>
<evidence type="ECO:0000269" key="8">
    <source>
    </source>
</evidence>
<evidence type="ECO:0000303" key="9">
    <source>
    </source>
</evidence>
<evidence type="ECO:0000305" key="10"/>
<keyword id="KW-0106">Calcium</keyword>
<keyword id="KW-0130">Cell adhesion</keyword>
<keyword id="KW-1003">Cell membrane</keyword>
<keyword id="KW-1015">Disulfide bond</keyword>
<keyword id="KW-0245">EGF-like domain</keyword>
<keyword id="KW-0325">Glycoprotein</keyword>
<keyword id="KW-0430">Lectin</keyword>
<keyword id="KW-0472">Membrane</keyword>
<keyword id="KW-0479">Metal-binding</keyword>
<keyword id="KW-1185">Reference proteome</keyword>
<keyword id="KW-0677">Repeat</keyword>
<keyword id="KW-0732">Signal</keyword>
<keyword id="KW-0768">Sushi</keyword>
<keyword id="KW-0812">Transmembrane</keyword>
<keyword id="KW-1133">Transmembrane helix</keyword>